<keyword id="KW-1003">Cell membrane</keyword>
<keyword id="KW-0325">Glycoprotein</keyword>
<keyword id="KW-0472">Membrane</keyword>
<keyword id="KW-0552">Olfaction</keyword>
<keyword id="KW-0675">Receptor</keyword>
<keyword id="KW-1185">Reference proteome</keyword>
<keyword id="KW-0716">Sensory transduction</keyword>
<keyword id="KW-0807">Transducer</keyword>
<keyword id="KW-0812">Transmembrane</keyword>
<keyword id="KW-1133">Transmembrane helix</keyword>
<reference key="1">
    <citation type="journal article" date="2000" name="Science">
        <title>The genome sequence of Drosophila melanogaster.</title>
        <authorList>
            <person name="Adams M.D."/>
            <person name="Celniker S.E."/>
            <person name="Holt R.A."/>
            <person name="Evans C.A."/>
            <person name="Gocayne J.D."/>
            <person name="Amanatides P.G."/>
            <person name="Scherer S.E."/>
            <person name="Li P.W."/>
            <person name="Hoskins R.A."/>
            <person name="Galle R.F."/>
            <person name="George R.A."/>
            <person name="Lewis S.E."/>
            <person name="Richards S."/>
            <person name="Ashburner M."/>
            <person name="Henderson S.N."/>
            <person name="Sutton G.G."/>
            <person name="Wortman J.R."/>
            <person name="Yandell M.D."/>
            <person name="Zhang Q."/>
            <person name="Chen L.X."/>
            <person name="Brandon R.C."/>
            <person name="Rogers Y.-H.C."/>
            <person name="Blazej R.G."/>
            <person name="Champe M."/>
            <person name="Pfeiffer B.D."/>
            <person name="Wan K.H."/>
            <person name="Doyle C."/>
            <person name="Baxter E.G."/>
            <person name="Helt G."/>
            <person name="Nelson C.R."/>
            <person name="Miklos G.L.G."/>
            <person name="Abril J.F."/>
            <person name="Agbayani A."/>
            <person name="An H.-J."/>
            <person name="Andrews-Pfannkoch C."/>
            <person name="Baldwin D."/>
            <person name="Ballew R.M."/>
            <person name="Basu A."/>
            <person name="Baxendale J."/>
            <person name="Bayraktaroglu L."/>
            <person name="Beasley E.M."/>
            <person name="Beeson K.Y."/>
            <person name="Benos P.V."/>
            <person name="Berman B.P."/>
            <person name="Bhandari D."/>
            <person name="Bolshakov S."/>
            <person name="Borkova D."/>
            <person name="Botchan M.R."/>
            <person name="Bouck J."/>
            <person name="Brokstein P."/>
            <person name="Brottier P."/>
            <person name="Burtis K.C."/>
            <person name="Busam D.A."/>
            <person name="Butler H."/>
            <person name="Cadieu E."/>
            <person name="Center A."/>
            <person name="Chandra I."/>
            <person name="Cherry J.M."/>
            <person name="Cawley S."/>
            <person name="Dahlke C."/>
            <person name="Davenport L.B."/>
            <person name="Davies P."/>
            <person name="de Pablos B."/>
            <person name="Delcher A."/>
            <person name="Deng Z."/>
            <person name="Mays A.D."/>
            <person name="Dew I."/>
            <person name="Dietz S.M."/>
            <person name="Dodson K."/>
            <person name="Doup L.E."/>
            <person name="Downes M."/>
            <person name="Dugan-Rocha S."/>
            <person name="Dunkov B.C."/>
            <person name="Dunn P."/>
            <person name="Durbin K.J."/>
            <person name="Evangelista C.C."/>
            <person name="Ferraz C."/>
            <person name="Ferriera S."/>
            <person name="Fleischmann W."/>
            <person name="Fosler C."/>
            <person name="Gabrielian A.E."/>
            <person name="Garg N.S."/>
            <person name="Gelbart W.M."/>
            <person name="Glasser K."/>
            <person name="Glodek A."/>
            <person name="Gong F."/>
            <person name="Gorrell J.H."/>
            <person name="Gu Z."/>
            <person name="Guan P."/>
            <person name="Harris M."/>
            <person name="Harris N.L."/>
            <person name="Harvey D.A."/>
            <person name="Heiman T.J."/>
            <person name="Hernandez J.R."/>
            <person name="Houck J."/>
            <person name="Hostin D."/>
            <person name="Houston K.A."/>
            <person name="Howland T.J."/>
            <person name="Wei M.-H."/>
            <person name="Ibegwam C."/>
            <person name="Jalali M."/>
            <person name="Kalush F."/>
            <person name="Karpen G.H."/>
            <person name="Ke Z."/>
            <person name="Kennison J.A."/>
            <person name="Ketchum K.A."/>
            <person name="Kimmel B.E."/>
            <person name="Kodira C.D."/>
            <person name="Kraft C.L."/>
            <person name="Kravitz S."/>
            <person name="Kulp D."/>
            <person name="Lai Z."/>
            <person name="Lasko P."/>
            <person name="Lei Y."/>
            <person name="Levitsky A.A."/>
            <person name="Li J.H."/>
            <person name="Li Z."/>
            <person name="Liang Y."/>
            <person name="Lin X."/>
            <person name="Liu X."/>
            <person name="Mattei B."/>
            <person name="McIntosh T.C."/>
            <person name="McLeod M.P."/>
            <person name="McPherson D."/>
            <person name="Merkulov G."/>
            <person name="Milshina N.V."/>
            <person name="Mobarry C."/>
            <person name="Morris J."/>
            <person name="Moshrefi A."/>
            <person name="Mount S.M."/>
            <person name="Moy M."/>
            <person name="Murphy B."/>
            <person name="Murphy L."/>
            <person name="Muzny D.M."/>
            <person name="Nelson D.L."/>
            <person name="Nelson D.R."/>
            <person name="Nelson K.A."/>
            <person name="Nixon K."/>
            <person name="Nusskern D.R."/>
            <person name="Pacleb J.M."/>
            <person name="Palazzolo M."/>
            <person name="Pittman G.S."/>
            <person name="Pan S."/>
            <person name="Pollard J."/>
            <person name="Puri V."/>
            <person name="Reese M.G."/>
            <person name="Reinert K."/>
            <person name="Remington K."/>
            <person name="Saunders R.D.C."/>
            <person name="Scheeler F."/>
            <person name="Shen H."/>
            <person name="Shue B.C."/>
            <person name="Siden-Kiamos I."/>
            <person name="Simpson M."/>
            <person name="Skupski M.P."/>
            <person name="Smith T.J."/>
            <person name="Spier E."/>
            <person name="Spradling A.C."/>
            <person name="Stapleton M."/>
            <person name="Strong R."/>
            <person name="Sun E."/>
            <person name="Svirskas R."/>
            <person name="Tector C."/>
            <person name="Turner R."/>
            <person name="Venter E."/>
            <person name="Wang A.H."/>
            <person name="Wang X."/>
            <person name="Wang Z.-Y."/>
            <person name="Wassarman D.A."/>
            <person name="Weinstock G.M."/>
            <person name="Weissenbach J."/>
            <person name="Williams S.M."/>
            <person name="Woodage T."/>
            <person name="Worley K.C."/>
            <person name="Wu D."/>
            <person name="Yang S."/>
            <person name="Yao Q.A."/>
            <person name="Ye J."/>
            <person name="Yeh R.-F."/>
            <person name="Zaveri J.S."/>
            <person name="Zhan M."/>
            <person name="Zhang G."/>
            <person name="Zhao Q."/>
            <person name="Zheng L."/>
            <person name="Zheng X.H."/>
            <person name="Zhong F.N."/>
            <person name="Zhong W."/>
            <person name="Zhou X."/>
            <person name="Zhu S.C."/>
            <person name="Zhu X."/>
            <person name="Smith H.O."/>
            <person name="Gibbs R.A."/>
            <person name="Myers E.W."/>
            <person name="Rubin G.M."/>
            <person name="Venter J.C."/>
        </authorList>
    </citation>
    <scope>NUCLEOTIDE SEQUENCE [LARGE SCALE GENOMIC DNA]</scope>
    <source>
        <strain>Berkeley</strain>
    </source>
</reference>
<reference key="2">
    <citation type="journal article" date="2002" name="Genome Biol.">
        <title>Annotation of the Drosophila melanogaster euchromatic genome: a systematic review.</title>
        <authorList>
            <person name="Misra S."/>
            <person name="Crosby M.A."/>
            <person name="Mungall C.J."/>
            <person name="Matthews B.B."/>
            <person name="Campbell K.S."/>
            <person name="Hradecky P."/>
            <person name="Huang Y."/>
            <person name="Kaminker J.S."/>
            <person name="Millburn G.H."/>
            <person name="Prochnik S.E."/>
            <person name="Smith C.D."/>
            <person name="Tupy J.L."/>
            <person name="Whitfield E.J."/>
            <person name="Bayraktaroglu L."/>
            <person name="Berman B.P."/>
            <person name="Bettencourt B.R."/>
            <person name="Celniker S.E."/>
            <person name="de Grey A.D.N.J."/>
            <person name="Drysdale R.A."/>
            <person name="Harris N.L."/>
            <person name="Richter J."/>
            <person name="Russo S."/>
            <person name="Schroeder A.J."/>
            <person name="Shu S.Q."/>
            <person name="Stapleton M."/>
            <person name="Yamada C."/>
            <person name="Ashburner M."/>
            <person name="Gelbart W.M."/>
            <person name="Rubin G.M."/>
            <person name="Lewis S.E."/>
        </authorList>
    </citation>
    <scope>GENOME REANNOTATION</scope>
    <source>
        <strain>Berkeley</strain>
    </source>
</reference>
<reference key="3">
    <citation type="journal article" date="2000" name="Cell">
        <title>An olfactory sensory map in the fly brain.</title>
        <authorList>
            <person name="Vosshall L.B."/>
            <person name="Wong A.M."/>
            <person name="Axel R."/>
        </authorList>
    </citation>
    <scope>TISSUE SPECIFICITY</scope>
</reference>
<reference key="4">
    <citation type="journal article" date="2006" name="Cell">
        <title>Coding of odors by a receptor repertoire.</title>
        <authorList>
            <person name="Hallem E.A."/>
            <person name="Carlson J.R."/>
        </authorList>
    </citation>
    <scope>FUNCTION</scope>
</reference>
<reference key="5">
    <citation type="journal article" date="2011" name="J. Comput. Neurosci.">
        <title>System identification of Drosophila olfactory sensory neurons.</title>
        <authorList>
            <person name="Kim A.J."/>
            <person name="Lazar A.A."/>
            <person name="Slutskiy Y.B."/>
        </authorList>
    </citation>
    <scope>FUNCTION</scope>
</reference>
<reference key="6">
    <citation type="journal article" date="2011" name="Nature">
        <title>A natural polymorphism alters odour and DEET sensitivity in an insect odorant receptor.</title>
        <authorList>
            <person name="Pellegrino M."/>
            <person name="Steinbach N."/>
            <person name="Stensmyr M.C."/>
            <person name="Hansson B.S."/>
            <person name="Vosshall L.B."/>
        </authorList>
    </citation>
    <scope>INTERACTION WITH ORCO</scope>
    <scope>FUNCTION</scope>
</reference>
<feature type="chain" id="PRO_0000174256" description="Odorant receptor 59b">
    <location>
        <begin position="1"/>
        <end position="398"/>
    </location>
</feature>
<feature type="topological domain" description="Cytoplasmic" evidence="2">
    <location>
        <begin position="1"/>
        <end position="46"/>
    </location>
</feature>
<feature type="transmembrane region" description="Helical; Name=1" evidence="2">
    <location>
        <begin position="47"/>
        <end position="67"/>
    </location>
</feature>
<feature type="topological domain" description="Extracellular" evidence="2">
    <location>
        <begin position="68"/>
        <end position="84"/>
    </location>
</feature>
<feature type="transmembrane region" description="Helical; Name=2" evidence="2">
    <location>
        <begin position="85"/>
        <end position="105"/>
    </location>
</feature>
<feature type="topological domain" description="Cytoplasmic" evidence="2">
    <location>
        <begin position="106"/>
        <end position="141"/>
    </location>
</feature>
<feature type="transmembrane region" description="Helical; Name=3" evidence="2">
    <location>
        <begin position="142"/>
        <end position="162"/>
    </location>
</feature>
<feature type="topological domain" description="Extracellular" evidence="2">
    <location>
        <begin position="163"/>
        <end position="179"/>
    </location>
</feature>
<feature type="transmembrane region" description="Helical; Name=4" evidence="2">
    <location>
        <begin position="180"/>
        <end position="200"/>
    </location>
</feature>
<feature type="topological domain" description="Cytoplasmic" evidence="2">
    <location>
        <begin position="201"/>
        <end position="269"/>
    </location>
</feature>
<feature type="transmembrane region" description="Helical; Name=5" evidence="2">
    <location>
        <begin position="270"/>
        <end position="290"/>
    </location>
</feature>
<feature type="topological domain" description="Extracellular" evidence="2">
    <location>
        <begin position="291"/>
        <end position="293"/>
    </location>
</feature>
<feature type="transmembrane region" description="Helical; Name=6" evidence="2">
    <location>
        <begin position="294"/>
        <end position="314"/>
    </location>
</feature>
<feature type="topological domain" description="Cytoplasmic" evidence="2">
    <location>
        <begin position="315"/>
        <end position="348"/>
    </location>
</feature>
<feature type="transmembrane region" description="Helical; Name=7" evidence="2">
    <location>
        <begin position="349"/>
        <end position="369"/>
    </location>
</feature>
<feature type="topological domain" description="Extracellular" evidence="2">
    <location>
        <begin position="370"/>
        <end position="398"/>
    </location>
</feature>
<feature type="glycosylation site" description="N-linked (GlcNAc...) asparagine" evidence="2">
    <location>
        <position position="374"/>
    </location>
</feature>
<comment type="function">
    <text evidence="4 5 6">Odorant receptor which mediates acceptance or avoidance behavior, depending on its substrates. The odorant receptor repertoire encodes a large collection of odor stimuli that vary widely in identity, intensity, and duration. Forms a complex with Orco to form odorant-sensing units, providing sensitive and prolonged odorant signaling and calcium permeability. Also plays a role in the response to N,N-Diethyl-meta-toluamide (DEET), the most widely used insect repellent worldwide.</text>
</comment>
<comment type="subunit">
    <text evidence="6">Interacts with Orco. Complexes exist early in the endomembrane system in olfactory sensory neurons (OSNs), coupling these complexes to the conserved ciliary trafficking pathway.</text>
</comment>
<comment type="subcellular location">
    <subcellularLocation>
        <location evidence="1">Cell membrane</location>
        <topology evidence="1">Multi-pass membrane protein</topology>
    </subcellularLocation>
</comment>
<comment type="tissue specificity">
    <text evidence="3">Expressed in olfactory sensory neurons in the antenna.</text>
</comment>
<comment type="miscellaneous">
    <text>The atypical heteromeric and topological design of the odorant receptors appears to be an insect-specific solution for odor recognition, making the OR/Orco complex an attractive target for the development of highly selective insect repellents to disrupt olfactory-mediated host-seeking behaviors of insect disease vectors. Odor-evoked OR currents are independent of known G-protein-coupled second messenger pathways.</text>
</comment>
<comment type="similarity">
    <text evidence="7">Belongs to the insect chemoreceptor superfamily. Heteromeric odorant receptor channel (TC 1.A.69) family. Or2a subfamily.</text>
</comment>
<accession>Q9W1P8</accession>
<sequence>MAVFKLIKPAPLTEKVQSRQGNIYLYRAMWLIGWIPPKEGVLRYVYLFWTCVPFAFGVFYLPVGFIISYVQEFKNFTPGEFLTSLQVCINVYGASVKSTITYLFLWRLRKTEILLDSLDKRLANDSDRERIHNMVARCNYAFLIYSFIYCGYAGSTFLSYALSGRPPWSVYNPFIDWRDGMGSLWIQAIFEYITMSFAVLQDQLSDTYPLMFTIMFRAHMEVLKDHVRSLRMDPERSEADNYQDLVNCVLDHKTILKCCDMIRPMISRTIFVQFALIGSVLGLTLVNVFFFSNFWKGVASLLFVITILLQTFPFCYTCNMLIDDAQDLSNEIFQSNWVDAEPRYKATLVLFMHHVQQPIIFIAGGIFPISMNSNITVAKFAFSIITIVRQMNLAEQFQ</sequence>
<name>OR59B_DROME</name>
<gene>
    <name type="primary">Or59b</name>
    <name type="ORF">CG3569</name>
</gene>
<protein>
    <recommendedName>
        <fullName>Odorant receptor 59b</fullName>
    </recommendedName>
</protein>
<proteinExistence type="evidence at protein level"/>
<evidence type="ECO:0000250" key="1"/>
<evidence type="ECO:0000255" key="2"/>
<evidence type="ECO:0000269" key="3">
    <source>
    </source>
</evidence>
<evidence type="ECO:0000269" key="4">
    <source>
    </source>
</evidence>
<evidence type="ECO:0000269" key="5">
    <source>
    </source>
</evidence>
<evidence type="ECO:0000269" key="6">
    <source>
    </source>
</evidence>
<evidence type="ECO:0000305" key="7"/>
<dbReference type="EMBL" id="AE013599">
    <property type="protein sequence ID" value="AAF47008.1"/>
    <property type="molecule type" value="Genomic_DNA"/>
</dbReference>
<dbReference type="RefSeq" id="NP_523822.1">
    <property type="nucleotide sequence ID" value="NM_079098.2"/>
</dbReference>
<dbReference type="SMR" id="Q9W1P8"/>
<dbReference type="FunCoup" id="Q9W1P8">
    <property type="interactions" value="32"/>
</dbReference>
<dbReference type="STRING" id="7227.FBpp0071930"/>
<dbReference type="GlyCosmos" id="Q9W1P8">
    <property type="glycosylation" value="1 site, No reported glycans"/>
</dbReference>
<dbReference type="GlyGen" id="Q9W1P8">
    <property type="glycosylation" value="1 site"/>
</dbReference>
<dbReference type="PaxDb" id="7227-FBpp0071930"/>
<dbReference type="EnsemblMetazoa" id="FBtr0072021">
    <property type="protein sequence ID" value="FBpp0071930"/>
    <property type="gene ID" value="FBgn0034865"/>
</dbReference>
<dbReference type="GeneID" id="37715"/>
<dbReference type="KEGG" id="dme:Dmel_CG3569"/>
<dbReference type="AGR" id="FB:FBgn0034865"/>
<dbReference type="CTD" id="37715"/>
<dbReference type="FlyBase" id="FBgn0034865">
    <property type="gene designation" value="Or59b"/>
</dbReference>
<dbReference type="VEuPathDB" id="VectorBase:FBgn0034865"/>
<dbReference type="eggNOG" id="ENOG502T9IX">
    <property type="taxonomic scope" value="Eukaryota"/>
</dbReference>
<dbReference type="GeneTree" id="ENSGT00540000073151"/>
<dbReference type="HOGENOM" id="CLU_033399_8_0_1"/>
<dbReference type="InParanoid" id="Q9W1P8"/>
<dbReference type="OMA" id="IYMYRGM"/>
<dbReference type="OrthoDB" id="6604226at2759"/>
<dbReference type="PhylomeDB" id="Q9W1P8"/>
<dbReference type="BioGRID-ORCS" id="37715">
    <property type="hits" value="0 hits in 1 CRISPR screen"/>
</dbReference>
<dbReference type="GenomeRNAi" id="37715"/>
<dbReference type="PRO" id="PR:Q9W1P8"/>
<dbReference type="Proteomes" id="UP000000803">
    <property type="component" value="Chromosome 2R"/>
</dbReference>
<dbReference type="Bgee" id="FBgn0034865">
    <property type="expression patterns" value="Expressed in antennal olfactory receptor neuron of basiconic sensillum in antenna and 6 other cell types or tissues"/>
</dbReference>
<dbReference type="GO" id="GO:0032590">
    <property type="term" value="C:dendrite membrane"/>
    <property type="evidence" value="ECO:0000250"/>
    <property type="project" value="FlyBase"/>
</dbReference>
<dbReference type="GO" id="GO:0016020">
    <property type="term" value="C:membrane"/>
    <property type="evidence" value="ECO:0000303"/>
    <property type="project" value="UniProtKB"/>
</dbReference>
<dbReference type="GO" id="GO:0005886">
    <property type="term" value="C:plasma membrane"/>
    <property type="evidence" value="ECO:0007005"/>
    <property type="project" value="FlyBase"/>
</dbReference>
<dbReference type="GO" id="GO:0170020">
    <property type="term" value="F:ionotropic olfactory receptor activity"/>
    <property type="evidence" value="ECO:0007005"/>
    <property type="project" value="FlyBase"/>
</dbReference>
<dbReference type="GO" id="GO:0005549">
    <property type="term" value="F:odorant binding"/>
    <property type="evidence" value="ECO:0000250"/>
    <property type="project" value="FlyBase"/>
</dbReference>
<dbReference type="GO" id="GO:0004984">
    <property type="term" value="F:olfactory receptor activity"/>
    <property type="evidence" value="ECO:0000318"/>
    <property type="project" value="GO_Central"/>
</dbReference>
<dbReference type="GO" id="GO:0050911">
    <property type="term" value="P:detection of chemical stimulus involved in sensory perception of smell"/>
    <property type="evidence" value="ECO:0007005"/>
    <property type="project" value="FlyBase"/>
</dbReference>
<dbReference type="GO" id="GO:0007608">
    <property type="term" value="P:sensory perception of smell"/>
    <property type="evidence" value="ECO:0000303"/>
    <property type="project" value="UniProtKB"/>
</dbReference>
<dbReference type="GO" id="GO:0007165">
    <property type="term" value="P:signal transduction"/>
    <property type="evidence" value="ECO:0007669"/>
    <property type="project" value="UniProtKB-KW"/>
</dbReference>
<dbReference type="InterPro" id="IPR004117">
    <property type="entry name" value="7tm6_olfct_rcpt"/>
</dbReference>
<dbReference type="PANTHER" id="PTHR21137">
    <property type="entry name" value="ODORANT RECEPTOR"/>
    <property type="match status" value="1"/>
</dbReference>
<dbReference type="PANTHER" id="PTHR21137:SF35">
    <property type="entry name" value="ODORANT RECEPTOR 19A-RELATED"/>
    <property type="match status" value="1"/>
</dbReference>
<dbReference type="Pfam" id="PF02949">
    <property type="entry name" value="7tm_6"/>
    <property type="match status" value="1"/>
</dbReference>
<organism>
    <name type="scientific">Drosophila melanogaster</name>
    <name type="common">Fruit fly</name>
    <dbReference type="NCBI Taxonomy" id="7227"/>
    <lineage>
        <taxon>Eukaryota</taxon>
        <taxon>Metazoa</taxon>
        <taxon>Ecdysozoa</taxon>
        <taxon>Arthropoda</taxon>
        <taxon>Hexapoda</taxon>
        <taxon>Insecta</taxon>
        <taxon>Pterygota</taxon>
        <taxon>Neoptera</taxon>
        <taxon>Endopterygota</taxon>
        <taxon>Diptera</taxon>
        <taxon>Brachycera</taxon>
        <taxon>Muscomorpha</taxon>
        <taxon>Ephydroidea</taxon>
        <taxon>Drosophilidae</taxon>
        <taxon>Drosophila</taxon>
        <taxon>Sophophora</taxon>
    </lineage>
</organism>